<gene>
    <name type="primary">PDC2</name>
    <name type="ordered locus">Os03g0293500</name>
    <name type="ordered locus">LOC_Os03g18220</name>
</gene>
<dbReference type="EC" id="4.1.1.1"/>
<dbReference type="EMBL" id="DP000009">
    <property type="protein sequence ID" value="ABF95411.1"/>
    <property type="molecule type" value="Genomic_DNA"/>
</dbReference>
<dbReference type="EMBL" id="AP008209">
    <property type="protein sequence ID" value="BAF11725.1"/>
    <property type="molecule type" value="Genomic_DNA"/>
</dbReference>
<dbReference type="EMBL" id="AP014959">
    <property type="protein sequence ID" value="BAS83688.1"/>
    <property type="molecule type" value="Genomic_DNA"/>
</dbReference>
<dbReference type="EMBL" id="AK101594">
    <property type="status" value="NOT_ANNOTATED_CDS"/>
    <property type="molecule type" value="mRNA"/>
</dbReference>
<dbReference type="RefSeq" id="XP_015631876.1">
    <property type="nucleotide sequence ID" value="XM_015776390.1"/>
</dbReference>
<dbReference type="SMR" id="Q10MW3"/>
<dbReference type="FunCoup" id="Q10MW3">
    <property type="interactions" value="151"/>
</dbReference>
<dbReference type="STRING" id="39947.Q10MW3"/>
<dbReference type="PaxDb" id="39947-Q10MW3"/>
<dbReference type="EnsemblPlants" id="Os03t0293500-02">
    <property type="protein sequence ID" value="Os03t0293500-02"/>
    <property type="gene ID" value="Os03g0293500"/>
</dbReference>
<dbReference type="Gramene" id="Os03t0293500-02">
    <property type="protein sequence ID" value="Os03t0293500-02"/>
    <property type="gene ID" value="Os03g0293500"/>
</dbReference>
<dbReference type="KEGG" id="dosa:Os03g0293500"/>
<dbReference type="eggNOG" id="KOG1184">
    <property type="taxonomic scope" value="Eukaryota"/>
</dbReference>
<dbReference type="HOGENOM" id="CLU_013748_0_2_1"/>
<dbReference type="InParanoid" id="Q10MW3"/>
<dbReference type="OMA" id="IREHFHA"/>
<dbReference type="OrthoDB" id="3970464at2759"/>
<dbReference type="PlantReactome" id="R-OSA-1119267">
    <property type="pathway name" value="Phenylalanine degradation III"/>
</dbReference>
<dbReference type="PlantReactome" id="R-OSA-1119460">
    <property type="pathway name" value="Isoleucine biosynthesis from threonine"/>
</dbReference>
<dbReference type="PlantReactome" id="R-OSA-1119486">
    <property type="pathway name" value="IAA biosynthesis I"/>
</dbReference>
<dbReference type="PlantReactome" id="R-OSA-1119600">
    <property type="pathway name" value="Valine biosynthesis"/>
</dbReference>
<dbReference type="Proteomes" id="UP000000763">
    <property type="component" value="Chromosome 3"/>
</dbReference>
<dbReference type="Proteomes" id="UP000059680">
    <property type="component" value="Chromosome 3"/>
</dbReference>
<dbReference type="ExpressionAtlas" id="Q10MW3">
    <property type="expression patterns" value="baseline and differential"/>
</dbReference>
<dbReference type="GO" id="GO:0005829">
    <property type="term" value="C:cytosol"/>
    <property type="evidence" value="ECO:0000318"/>
    <property type="project" value="GO_Central"/>
</dbReference>
<dbReference type="GO" id="GO:0000287">
    <property type="term" value="F:magnesium ion binding"/>
    <property type="evidence" value="ECO:0007669"/>
    <property type="project" value="InterPro"/>
</dbReference>
<dbReference type="GO" id="GO:0004737">
    <property type="term" value="F:pyruvate decarboxylase activity"/>
    <property type="evidence" value="ECO:0000318"/>
    <property type="project" value="GO_Central"/>
</dbReference>
<dbReference type="GO" id="GO:0030976">
    <property type="term" value="F:thiamine pyrophosphate binding"/>
    <property type="evidence" value="ECO:0007669"/>
    <property type="project" value="InterPro"/>
</dbReference>
<dbReference type="GO" id="GO:0000949">
    <property type="term" value="P:aromatic amino acid family catabolic process to alcohol via Ehrlich pathway"/>
    <property type="evidence" value="ECO:0000318"/>
    <property type="project" value="GO_Central"/>
</dbReference>
<dbReference type="CDD" id="cd02005">
    <property type="entry name" value="TPP_PDC_IPDC"/>
    <property type="match status" value="1"/>
</dbReference>
<dbReference type="CDD" id="cd07038">
    <property type="entry name" value="TPP_PYR_PDC_IPDC_like"/>
    <property type="match status" value="1"/>
</dbReference>
<dbReference type="FunFam" id="3.40.50.1220:FF:000009">
    <property type="entry name" value="Pyruvate decarboxylase 1"/>
    <property type="match status" value="1"/>
</dbReference>
<dbReference type="FunFam" id="3.40.50.970:FF:000021">
    <property type="entry name" value="Pyruvate decarboxylase 1"/>
    <property type="match status" value="1"/>
</dbReference>
<dbReference type="FunFam" id="3.40.50.970:FF:000017">
    <property type="entry name" value="pyruvate decarboxylase 1"/>
    <property type="match status" value="1"/>
</dbReference>
<dbReference type="Gene3D" id="3.40.50.970">
    <property type="match status" value="2"/>
</dbReference>
<dbReference type="Gene3D" id="3.40.50.1220">
    <property type="entry name" value="TPP-binding domain"/>
    <property type="match status" value="1"/>
</dbReference>
<dbReference type="InterPro" id="IPR029035">
    <property type="entry name" value="DHS-like_NAD/FAD-binding_dom"/>
</dbReference>
<dbReference type="InterPro" id="IPR012110">
    <property type="entry name" value="PDC/IPDC-like"/>
</dbReference>
<dbReference type="InterPro" id="IPR029061">
    <property type="entry name" value="THDP-binding"/>
</dbReference>
<dbReference type="InterPro" id="IPR012000">
    <property type="entry name" value="Thiamin_PyroP_enz_cen_dom"/>
</dbReference>
<dbReference type="InterPro" id="IPR012001">
    <property type="entry name" value="Thiamin_PyroP_enz_TPP-bd_dom"/>
</dbReference>
<dbReference type="InterPro" id="IPR011766">
    <property type="entry name" value="TPP_enzyme_TPP-bd"/>
</dbReference>
<dbReference type="InterPro" id="IPR047214">
    <property type="entry name" value="TPP_PDC_IPDC"/>
</dbReference>
<dbReference type="InterPro" id="IPR047213">
    <property type="entry name" value="TPP_PYR_PDC_IPDC-like"/>
</dbReference>
<dbReference type="PANTHER" id="PTHR43452">
    <property type="entry name" value="PYRUVATE DECARBOXYLASE"/>
    <property type="match status" value="1"/>
</dbReference>
<dbReference type="PANTHER" id="PTHR43452:SF39">
    <property type="entry name" value="PYRUVATE DECARBOXYLASE 2"/>
    <property type="match status" value="1"/>
</dbReference>
<dbReference type="Pfam" id="PF02775">
    <property type="entry name" value="TPP_enzyme_C"/>
    <property type="match status" value="1"/>
</dbReference>
<dbReference type="Pfam" id="PF00205">
    <property type="entry name" value="TPP_enzyme_M"/>
    <property type="match status" value="1"/>
</dbReference>
<dbReference type="Pfam" id="PF02776">
    <property type="entry name" value="TPP_enzyme_N"/>
    <property type="match status" value="1"/>
</dbReference>
<dbReference type="PIRSF" id="PIRSF036565">
    <property type="entry name" value="Pyruvt_ip_decrb"/>
    <property type="match status" value="1"/>
</dbReference>
<dbReference type="SUPFAM" id="SSF52467">
    <property type="entry name" value="DHS-like NAD/FAD-binding domain"/>
    <property type="match status" value="1"/>
</dbReference>
<dbReference type="SUPFAM" id="SSF52518">
    <property type="entry name" value="Thiamin diphosphate-binding fold (THDP-binding)"/>
    <property type="match status" value="2"/>
</dbReference>
<keyword id="KW-0210">Decarboxylase</keyword>
<keyword id="KW-0456">Lyase</keyword>
<keyword id="KW-0460">Magnesium</keyword>
<keyword id="KW-0479">Metal-binding</keyword>
<keyword id="KW-1185">Reference proteome</keyword>
<keyword id="KW-0786">Thiamine pyrophosphate</keyword>
<organism>
    <name type="scientific">Oryza sativa subsp. japonica</name>
    <name type="common">Rice</name>
    <dbReference type="NCBI Taxonomy" id="39947"/>
    <lineage>
        <taxon>Eukaryota</taxon>
        <taxon>Viridiplantae</taxon>
        <taxon>Streptophyta</taxon>
        <taxon>Embryophyta</taxon>
        <taxon>Tracheophyta</taxon>
        <taxon>Spermatophyta</taxon>
        <taxon>Magnoliopsida</taxon>
        <taxon>Liliopsida</taxon>
        <taxon>Poales</taxon>
        <taxon>Poaceae</taxon>
        <taxon>BOP clade</taxon>
        <taxon>Oryzoideae</taxon>
        <taxon>Oryzeae</taxon>
        <taxon>Oryzinae</taxon>
        <taxon>Oryza</taxon>
        <taxon>Oryza sativa</taxon>
    </lineage>
</organism>
<accession>Q10MW3</accession>
<accession>P51848</accession>
<name>PDC2_ORYSJ</name>
<sequence length="605" mass="64719">METHIGSVDGAAAAADNGAVGCPASAVGCPMTSARPAPVSAGEASLGRHLARRLVQVGVSDVFAVPGDFNLTLLDHLIAEPGLRLVGCCNELNAGYAADGYARARGVGACAVTFTVGGLSVLNAIAGAYSENLPVICIAGGPNSNDYGTNRILHHTIGLPDFSQELRCFQTVTCHQAVVTNLEDAHEQIDTAIATALRESKPVYLSISCNLPGLPHPTFSRDPVPFFLAPRLSNKMGLEAAVEATVEFLNKAVKPVLVGGPKLRVAKAGKAFVDLVDASGYAYAVMPSAKGLVPETHPHFIGTYWGAVSTAFCAEIVESADAYLFAGPIFNDYSSVGYSFLLKKDKAIIVQPERVIVGNGPAFGCVMMKEFLSELAKRVNKNTTAYENYKRIFVPEGQPLESEPNEPLRVNVLFKHVQKMLNSDSAVIAETGDSWFNCQKLKLPEGCGYEFQMQYGSIGWSVGALLGYAQGAKDKRVIACIGDGSFQVTAQDVSTMIRCAQNSIIFLINNGGYTIEVEIHDGPYNVIKNWNYTGLVDAIHNGEGKCWTSKVKCEEELTEAIGMALGEKDCLCFIEVIAHKDDTSKELLEWGSRVSAANSRPPNPQ</sequence>
<evidence type="ECO:0000250" key="1"/>
<evidence type="ECO:0000305" key="2"/>
<proteinExistence type="evidence at transcript level"/>
<protein>
    <recommendedName>
        <fullName>Pyruvate decarboxylase 2</fullName>
        <shortName>PDC</shortName>
        <ecNumber>4.1.1.1</ecNumber>
    </recommendedName>
</protein>
<feature type="chain" id="PRO_0000090780" description="Pyruvate decarboxylase 2">
    <location>
        <begin position="1"/>
        <end position="605"/>
    </location>
</feature>
<feature type="region of interest" description="Thiamine pyrophosphate binding">
    <location>
        <begin position="433"/>
        <end position="515"/>
    </location>
</feature>
<feature type="binding site" evidence="1">
    <location>
        <position position="68"/>
    </location>
    <ligand>
        <name>substrate</name>
    </ligand>
</feature>
<feature type="binding site" evidence="1">
    <location>
        <position position="155"/>
    </location>
    <ligand>
        <name>substrate</name>
    </ligand>
</feature>
<feature type="binding site" evidence="1">
    <location>
        <position position="483"/>
    </location>
    <ligand>
        <name>Mg(2+)</name>
        <dbReference type="ChEBI" id="CHEBI:18420"/>
    </ligand>
</feature>
<feature type="binding site" evidence="1">
    <location>
        <position position="510"/>
    </location>
    <ligand>
        <name>Mg(2+)</name>
        <dbReference type="ChEBI" id="CHEBI:18420"/>
    </ligand>
</feature>
<feature type="binding site" evidence="1">
    <location>
        <position position="512"/>
    </location>
    <ligand>
        <name>Mg(2+)</name>
        <dbReference type="ChEBI" id="CHEBI:18420"/>
    </ligand>
</feature>
<feature type="binding site" evidence="1">
    <location>
        <position position="516"/>
    </location>
    <ligand>
        <name>substrate</name>
    </ligand>
</feature>
<comment type="catalytic activity">
    <reaction>
        <text>a 2-oxocarboxylate + H(+) = an aldehyde + CO2</text>
        <dbReference type="Rhea" id="RHEA:11628"/>
        <dbReference type="ChEBI" id="CHEBI:15378"/>
        <dbReference type="ChEBI" id="CHEBI:16526"/>
        <dbReference type="ChEBI" id="CHEBI:17478"/>
        <dbReference type="ChEBI" id="CHEBI:35179"/>
        <dbReference type="EC" id="4.1.1.1"/>
    </reaction>
</comment>
<comment type="cofactor">
    <cofactor>
        <name>a metal cation</name>
        <dbReference type="ChEBI" id="CHEBI:25213"/>
    </cofactor>
    <text>Binds 1 metal ion per subunit.</text>
</comment>
<comment type="cofactor">
    <cofactor>
        <name>thiamine diphosphate</name>
        <dbReference type="ChEBI" id="CHEBI:58937"/>
    </cofactor>
    <text>Binds 1 thiamine pyrophosphate per subunit.</text>
</comment>
<comment type="subunit">
    <text evidence="2">Homotetramer.</text>
</comment>
<comment type="similarity">
    <text evidence="2">Belongs to the TPP enzyme family.</text>
</comment>
<reference key="1">
    <citation type="journal article" date="2005" name="Genome Res.">
        <title>Sequence, annotation, and analysis of synteny between rice chromosome 3 and diverged grass species.</title>
        <authorList>
            <consortium name="The rice chromosome 3 sequencing consortium"/>
            <person name="Buell C.R."/>
            <person name="Yuan Q."/>
            <person name="Ouyang S."/>
            <person name="Liu J."/>
            <person name="Zhu W."/>
            <person name="Wang A."/>
            <person name="Maiti R."/>
            <person name="Haas B."/>
            <person name="Wortman J."/>
            <person name="Pertea M."/>
            <person name="Jones K.M."/>
            <person name="Kim M."/>
            <person name="Overton L."/>
            <person name="Tsitrin T."/>
            <person name="Fadrosh D."/>
            <person name="Bera J."/>
            <person name="Weaver B."/>
            <person name="Jin S."/>
            <person name="Johri S."/>
            <person name="Reardon M."/>
            <person name="Webb K."/>
            <person name="Hill J."/>
            <person name="Moffat K."/>
            <person name="Tallon L."/>
            <person name="Van Aken S."/>
            <person name="Lewis M."/>
            <person name="Utterback T."/>
            <person name="Feldblyum T."/>
            <person name="Zismann V."/>
            <person name="Iobst S."/>
            <person name="Hsiao J."/>
            <person name="de Vazeille A.R."/>
            <person name="Salzberg S.L."/>
            <person name="White O."/>
            <person name="Fraser C.M."/>
            <person name="Yu Y."/>
            <person name="Kim H."/>
            <person name="Rambo T."/>
            <person name="Currie J."/>
            <person name="Collura K."/>
            <person name="Kernodle-Thompson S."/>
            <person name="Wei F."/>
            <person name="Kudrna K."/>
            <person name="Ammiraju J.S.S."/>
            <person name="Luo M."/>
            <person name="Goicoechea J.L."/>
            <person name="Wing R.A."/>
            <person name="Henry D."/>
            <person name="Oates R."/>
            <person name="Palmer M."/>
            <person name="Pries G."/>
            <person name="Saski C."/>
            <person name="Simmons J."/>
            <person name="Soderlund C."/>
            <person name="Nelson W."/>
            <person name="de la Bastide M."/>
            <person name="Spiegel L."/>
            <person name="Nascimento L."/>
            <person name="Huang E."/>
            <person name="Preston R."/>
            <person name="Zutavern T."/>
            <person name="Palmer L."/>
            <person name="O'Shaughnessy A."/>
            <person name="Dike S."/>
            <person name="McCombie W.R."/>
            <person name="Minx P."/>
            <person name="Cordum H."/>
            <person name="Wilson R."/>
            <person name="Jin W."/>
            <person name="Lee H.R."/>
            <person name="Jiang J."/>
            <person name="Jackson S."/>
        </authorList>
    </citation>
    <scope>NUCLEOTIDE SEQUENCE [LARGE SCALE GENOMIC DNA]</scope>
    <source>
        <strain>cv. Nipponbare</strain>
    </source>
</reference>
<reference key="2">
    <citation type="journal article" date="2005" name="Nature">
        <title>The map-based sequence of the rice genome.</title>
        <authorList>
            <consortium name="International rice genome sequencing project (IRGSP)"/>
        </authorList>
    </citation>
    <scope>NUCLEOTIDE SEQUENCE [LARGE SCALE GENOMIC DNA]</scope>
    <source>
        <strain>cv. Nipponbare</strain>
    </source>
</reference>
<reference key="3">
    <citation type="journal article" date="2008" name="Nucleic Acids Res.">
        <title>The rice annotation project database (RAP-DB): 2008 update.</title>
        <authorList>
            <consortium name="The rice annotation project (RAP)"/>
        </authorList>
    </citation>
    <scope>GENOME REANNOTATION</scope>
    <source>
        <strain>cv. Nipponbare</strain>
    </source>
</reference>
<reference key="4">
    <citation type="journal article" date="2013" name="Rice">
        <title>Improvement of the Oryza sativa Nipponbare reference genome using next generation sequence and optical map data.</title>
        <authorList>
            <person name="Kawahara Y."/>
            <person name="de la Bastide M."/>
            <person name="Hamilton J.P."/>
            <person name="Kanamori H."/>
            <person name="McCombie W.R."/>
            <person name="Ouyang S."/>
            <person name="Schwartz D.C."/>
            <person name="Tanaka T."/>
            <person name="Wu J."/>
            <person name="Zhou S."/>
            <person name="Childs K.L."/>
            <person name="Davidson R.M."/>
            <person name="Lin H."/>
            <person name="Quesada-Ocampo L."/>
            <person name="Vaillancourt B."/>
            <person name="Sakai H."/>
            <person name="Lee S.S."/>
            <person name="Kim J."/>
            <person name="Numa H."/>
            <person name="Itoh T."/>
            <person name="Buell C.R."/>
            <person name="Matsumoto T."/>
        </authorList>
    </citation>
    <scope>GENOME REANNOTATION</scope>
    <source>
        <strain>cv. Nipponbare</strain>
    </source>
</reference>
<reference key="5">
    <citation type="journal article" date="2003" name="Science">
        <title>Collection, mapping, and annotation of over 28,000 cDNA clones from japonica rice.</title>
        <authorList>
            <consortium name="The rice full-length cDNA consortium"/>
        </authorList>
    </citation>
    <scope>NUCLEOTIDE SEQUENCE [LARGE SCALE MRNA]</scope>
    <source>
        <strain>cv. Nipponbare</strain>
    </source>
</reference>